<name>RS8_STRS2</name>
<dbReference type="EMBL" id="CP000408">
    <property type="protein sequence ID" value="ABP91245.1"/>
    <property type="molecule type" value="Genomic_DNA"/>
</dbReference>
<dbReference type="SMR" id="A4VYQ6"/>
<dbReference type="KEGG" id="ssv:SSU98_0085"/>
<dbReference type="HOGENOM" id="CLU_098428_0_2_9"/>
<dbReference type="GO" id="GO:1990904">
    <property type="term" value="C:ribonucleoprotein complex"/>
    <property type="evidence" value="ECO:0007669"/>
    <property type="project" value="UniProtKB-KW"/>
</dbReference>
<dbReference type="GO" id="GO:0005840">
    <property type="term" value="C:ribosome"/>
    <property type="evidence" value="ECO:0007669"/>
    <property type="project" value="UniProtKB-KW"/>
</dbReference>
<dbReference type="GO" id="GO:0019843">
    <property type="term" value="F:rRNA binding"/>
    <property type="evidence" value="ECO:0007669"/>
    <property type="project" value="UniProtKB-UniRule"/>
</dbReference>
<dbReference type="GO" id="GO:0003735">
    <property type="term" value="F:structural constituent of ribosome"/>
    <property type="evidence" value="ECO:0007669"/>
    <property type="project" value="InterPro"/>
</dbReference>
<dbReference type="GO" id="GO:0006412">
    <property type="term" value="P:translation"/>
    <property type="evidence" value="ECO:0007669"/>
    <property type="project" value="UniProtKB-UniRule"/>
</dbReference>
<dbReference type="FunFam" id="3.30.1370.30:FF:000002">
    <property type="entry name" value="30S ribosomal protein S8"/>
    <property type="match status" value="1"/>
</dbReference>
<dbReference type="FunFam" id="3.30.1490.10:FF:000001">
    <property type="entry name" value="30S ribosomal protein S8"/>
    <property type="match status" value="1"/>
</dbReference>
<dbReference type="Gene3D" id="3.30.1370.30">
    <property type="match status" value="1"/>
</dbReference>
<dbReference type="Gene3D" id="3.30.1490.10">
    <property type="match status" value="1"/>
</dbReference>
<dbReference type="HAMAP" id="MF_01302_B">
    <property type="entry name" value="Ribosomal_uS8_B"/>
    <property type="match status" value="1"/>
</dbReference>
<dbReference type="InterPro" id="IPR000630">
    <property type="entry name" value="Ribosomal_uS8"/>
</dbReference>
<dbReference type="InterPro" id="IPR047863">
    <property type="entry name" value="Ribosomal_uS8_CS"/>
</dbReference>
<dbReference type="InterPro" id="IPR035987">
    <property type="entry name" value="Ribosomal_uS8_sf"/>
</dbReference>
<dbReference type="NCBIfam" id="NF001109">
    <property type="entry name" value="PRK00136.1"/>
    <property type="match status" value="1"/>
</dbReference>
<dbReference type="PANTHER" id="PTHR11758">
    <property type="entry name" value="40S RIBOSOMAL PROTEIN S15A"/>
    <property type="match status" value="1"/>
</dbReference>
<dbReference type="Pfam" id="PF00410">
    <property type="entry name" value="Ribosomal_S8"/>
    <property type="match status" value="1"/>
</dbReference>
<dbReference type="SUPFAM" id="SSF56047">
    <property type="entry name" value="Ribosomal protein S8"/>
    <property type="match status" value="1"/>
</dbReference>
<dbReference type="PROSITE" id="PS00053">
    <property type="entry name" value="RIBOSOMAL_S8"/>
    <property type="match status" value="1"/>
</dbReference>
<proteinExistence type="inferred from homology"/>
<gene>
    <name evidence="1" type="primary">rpsH</name>
    <name type="ordered locus">SSU98_0085</name>
</gene>
<organism>
    <name type="scientific">Streptococcus suis (strain 98HAH33)</name>
    <dbReference type="NCBI Taxonomy" id="391296"/>
    <lineage>
        <taxon>Bacteria</taxon>
        <taxon>Bacillati</taxon>
        <taxon>Bacillota</taxon>
        <taxon>Bacilli</taxon>
        <taxon>Lactobacillales</taxon>
        <taxon>Streptococcaceae</taxon>
        <taxon>Streptococcus</taxon>
    </lineage>
</organism>
<accession>A4VYQ6</accession>
<keyword id="KW-0687">Ribonucleoprotein</keyword>
<keyword id="KW-0689">Ribosomal protein</keyword>
<keyword id="KW-0694">RNA-binding</keyword>
<keyword id="KW-0699">rRNA-binding</keyword>
<sequence length="132" mass="14690">MVMTDPIADFLTRIRNANQAKHEVLEVPASNIKKGIATILKNEGFVKNVEFIEDDKQGIIRVFLKYGPNGEKVITNLKRVSKPGLRVYSKREDIPKVLNGLGIAIISTSEGLLTDKQARQKNVGGEVIAYVW</sequence>
<reference key="1">
    <citation type="journal article" date="2007" name="PLoS ONE">
        <title>A glimpse of streptococcal toxic shock syndrome from comparative genomics of S. suis 2 Chinese isolates.</title>
        <authorList>
            <person name="Chen C."/>
            <person name="Tang J."/>
            <person name="Dong W."/>
            <person name="Wang C."/>
            <person name="Feng Y."/>
            <person name="Wang J."/>
            <person name="Zheng F."/>
            <person name="Pan X."/>
            <person name="Liu D."/>
            <person name="Li M."/>
            <person name="Song Y."/>
            <person name="Zhu X."/>
            <person name="Sun H."/>
            <person name="Feng T."/>
            <person name="Guo Z."/>
            <person name="Ju A."/>
            <person name="Ge J."/>
            <person name="Dong Y."/>
            <person name="Sun W."/>
            <person name="Jiang Y."/>
            <person name="Wang J."/>
            <person name="Yan J."/>
            <person name="Yang H."/>
            <person name="Wang X."/>
            <person name="Gao G.F."/>
            <person name="Yang R."/>
            <person name="Wang J."/>
            <person name="Yu J."/>
        </authorList>
    </citation>
    <scope>NUCLEOTIDE SEQUENCE [LARGE SCALE GENOMIC DNA]</scope>
    <source>
        <strain>98HAH33</strain>
    </source>
</reference>
<feature type="chain" id="PRO_0000305757" description="Small ribosomal subunit protein uS8">
    <location>
        <begin position="1"/>
        <end position="132"/>
    </location>
</feature>
<protein>
    <recommendedName>
        <fullName evidence="1">Small ribosomal subunit protein uS8</fullName>
    </recommendedName>
    <alternativeName>
        <fullName evidence="2">30S ribosomal protein S8</fullName>
    </alternativeName>
</protein>
<evidence type="ECO:0000255" key="1">
    <source>
        <dbReference type="HAMAP-Rule" id="MF_01302"/>
    </source>
</evidence>
<evidence type="ECO:0000305" key="2"/>
<comment type="function">
    <text evidence="1">One of the primary rRNA binding proteins, it binds directly to 16S rRNA central domain where it helps coordinate assembly of the platform of the 30S subunit.</text>
</comment>
<comment type="subunit">
    <text evidence="1">Part of the 30S ribosomal subunit. Contacts proteins S5 and S12.</text>
</comment>
<comment type="similarity">
    <text evidence="1">Belongs to the universal ribosomal protein uS8 family.</text>
</comment>